<keyword id="KW-0903">Direct protein sequencing</keyword>
<keyword id="KW-0479">Metal-binding</keyword>
<keyword id="KW-0520">NAD</keyword>
<keyword id="KW-0560">Oxidoreductase</keyword>
<keyword id="KW-1185">Reference proteome</keyword>
<keyword id="KW-0862">Zinc</keyword>
<organism>
    <name type="scientific">Cupriavidus necator (strain ATCC 17699 / DSM 428 / KCTC 22496 / NCIMB 10442 / H16 / Stanier 337)</name>
    <name type="common">Ralstonia eutropha</name>
    <dbReference type="NCBI Taxonomy" id="381666"/>
    <lineage>
        <taxon>Bacteria</taxon>
        <taxon>Pseudomonadati</taxon>
        <taxon>Pseudomonadota</taxon>
        <taxon>Betaproteobacteria</taxon>
        <taxon>Burkholderiales</taxon>
        <taxon>Burkholderiaceae</taxon>
        <taxon>Cupriavidus</taxon>
    </lineage>
</organism>
<sequence length="366" mass="38544">MTAMMKAAVFVEPGRIELADKPIPDIGPNDALVRITTTTICGTDVHILKGEYPVAKGLTVGHEPVGIIEKLGSAVTGYREGQRVIAGAICPNFNSYAAQDGVASQDGSYLMASGQCGCHGYKATAGWRFGNMIDGTQAEYVLVPDAQANLTPIPDGLTDEQVLMCPDIMSTGFKGAENANIRIGDTVAVFAQGPIGLCATAGARLCGATTIIAIDGNDHRLEIARKMGADVVLNFRNCDVVDEVMKLTGGRGVDASIEALGTQATFEQSLRVLKPGGTLSSLGVYSSDLTIPLSAFAAGLGDHKINTALCPGGKERMRRLINVIESGRVDLGALVTHQYRLDDIVAAYDLFANQRDGVLKIAIKPH</sequence>
<comment type="function">
    <text evidence="2 3">Multifunctional alcohol dehydrogenase exhibiting NAD(+)-dependent dehydrogenase activities for 2,3-butanediol, ethanol and acetaldehyde, and reductase activities for acetoin (NADH-dependent), and diacetyl and acetaldehyde (independently of whether NADH or NADPH is the reductant). The rate of oxidation of 2,3-butanediol is much higher than for the oxidation of ethanol. Has acetaldehyde dehydrogenase activity leading to acetate formation. May function in the release of excess reducing power in the absence of exogenous hydrogen acceptors such as oxygen.</text>
</comment>
<comment type="catalytic activity">
    <reaction evidence="2 3">
        <text>a primary alcohol + NAD(+) = an aldehyde + NADH + H(+)</text>
        <dbReference type="Rhea" id="RHEA:10736"/>
        <dbReference type="ChEBI" id="CHEBI:15378"/>
        <dbReference type="ChEBI" id="CHEBI:15734"/>
        <dbReference type="ChEBI" id="CHEBI:17478"/>
        <dbReference type="ChEBI" id="CHEBI:57540"/>
        <dbReference type="ChEBI" id="CHEBI:57945"/>
        <dbReference type="EC" id="1.1.1.1"/>
    </reaction>
</comment>
<comment type="catalytic activity">
    <reaction evidence="2 3">
        <text>a secondary alcohol + NAD(+) = a ketone + NADH + H(+)</text>
        <dbReference type="Rhea" id="RHEA:10740"/>
        <dbReference type="ChEBI" id="CHEBI:15378"/>
        <dbReference type="ChEBI" id="CHEBI:17087"/>
        <dbReference type="ChEBI" id="CHEBI:35681"/>
        <dbReference type="ChEBI" id="CHEBI:57540"/>
        <dbReference type="ChEBI" id="CHEBI:57945"/>
        <dbReference type="EC" id="1.1.1.1"/>
    </reaction>
</comment>
<comment type="catalytic activity">
    <reaction evidence="2 3">
        <text>(R,R)-butane-2,3-diol + NAD(+) = (R)-acetoin + NADH + H(+)</text>
        <dbReference type="Rhea" id="RHEA:24340"/>
        <dbReference type="ChEBI" id="CHEBI:15378"/>
        <dbReference type="ChEBI" id="CHEBI:15686"/>
        <dbReference type="ChEBI" id="CHEBI:16982"/>
        <dbReference type="ChEBI" id="CHEBI:57540"/>
        <dbReference type="ChEBI" id="CHEBI:57945"/>
        <dbReference type="EC" id="1.1.1.4"/>
    </reaction>
</comment>
<comment type="catalytic activity">
    <reaction evidence="2 3">
        <text>an aldehyde + NAD(+) + H2O = a carboxylate + NADH + 2 H(+)</text>
        <dbReference type="Rhea" id="RHEA:16185"/>
        <dbReference type="ChEBI" id="CHEBI:15377"/>
        <dbReference type="ChEBI" id="CHEBI:15378"/>
        <dbReference type="ChEBI" id="CHEBI:17478"/>
        <dbReference type="ChEBI" id="CHEBI:29067"/>
        <dbReference type="ChEBI" id="CHEBI:57540"/>
        <dbReference type="ChEBI" id="CHEBI:57945"/>
        <dbReference type="EC" id="1.2.1.3"/>
    </reaction>
</comment>
<comment type="cofactor">
    <cofactor evidence="1">
        <name>Zn(2+)</name>
        <dbReference type="ChEBI" id="CHEBI:29105"/>
    </cofactor>
    <text evidence="1">Binds 1 zinc ion per subunit.</text>
</comment>
<comment type="biophysicochemical properties">
    <kinetics>
        <KM evidence="3">0.67 mM for acetaldehyde (with NADH as cosubstrate)</KM>
        <KM evidence="3">0.69 mM for acetaldehyde (with NADPH as cosubstrate)</KM>
        <KM evidence="3">0.56 mM for acetoin (with NADH as cosubstrate)</KM>
        <KM evidence="3">1.42 mM for acetoin (with NADPH as cosubstrate)</KM>
        <KM evidence="3">0.56 mM for diacetyl (with NADH as cosubstrate)</KM>
        <KM evidence="3">1.1 mM for diacetyl (with NADPH as cosubstrate)</KM>
        <KM evidence="3">18.2 mM for erythro-2,3-butanediol (with NAD as cosubstrate)</KM>
        <KM evidence="3">5 mM for ethanol (with NAD as cosubstrate)</KM>
        <KM evidence="3">22.2 mM for threo-2,3-butanediol(with NAD as cosubstrate)</KM>
        <KM evidence="3">0.011 mM for NADH (with acetaldehyde as cosubstrate)</KM>
        <KM evidence="3">0.012 mM for NADH (with acetoin as cosubstrate)</KM>
        <KM evidence="3">0.011 mM for NADH (with diacetyl as cosubstrate)</KM>
        <KM evidence="3">0.009 mM for NAD (with ethanol as cosubstrate)</KM>
        <KM evidence="3">0.138 mM for NAD (with erythro-2,3-butanediol as cosubstrate)</KM>
        <KM evidence="3">0.145 mM for NAD (with threo-2,3-butanediol as cosubstrate)</KM>
        <KM evidence="3">0.053 mM for NADPH (with acetaldehyde as cosubstrate)</KM>
        <KM evidence="3">0.047 mM for NADPH (with acetoin as cosubstrate)</KM>
        <KM evidence="3">0.05 mM for NADPH (with diacetyl as cosubstrate)</KM>
    </kinetics>
</comment>
<comment type="subunit">
    <text evidence="3">Homotetramer.</text>
</comment>
<comment type="induction">
    <text evidence="3">By limited oxygen supply.</text>
</comment>
<comment type="similarity">
    <text evidence="4">Belongs to the zinc-containing alcohol dehydrogenase family.</text>
</comment>
<gene>
    <name type="primary">adh</name>
    <name type="ordered locus">H16_A0757</name>
</gene>
<proteinExistence type="evidence at protein level"/>
<feature type="initiator methionine" description="Removed" evidence="2">
    <location>
        <position position="1"/>
    </location>
</feature>
<feature type="chain" id="PRO_0000429032" description="Alcohol dehydrogenase">
    <location>
        <begin position="2"/>
        <end position="366"/>
    </location>
</feature>
<feature type="binding site" evidence="1">
    <location>
        <position position="41"/>
    </location>
    <ligand>
        <name>Zn(2+)</name>
        <dbReference type="ChEBI" id="CHEBI:29105"/>
        <note>catalytic</note>
    </ligand>
</feature>
<feature type="binding site" evidence="1">
    <location>
        <position position="62"/>
    </location>
    <ligand>
        <name>Zn(2+)</name>
        <dbReference type="ChEBI" id="CHEBI:29105"/>
        <note>catalytic</note>
    </ligand>
</feature>
<feature type="binding site" evidence="1">
    <location>
        <position position="63"/>
    </location>
    <ligand>
        <name>Zn(2+)</name>
        <dbReference type="ChEBI" id="CHEBI:29105"/>
        <note>catalytic</note>
    </ligand>
</feature>
<feature type="binding site" evidence="1">
    <location>
        <position position="167"/>
    </location>
    <ligand>
        <name>Zn(2+)</name>
        <dbReference type="ChEBI" id="CHEBI:29105"/>
        <note>catalytic</note>
    </ligand>
</feature>
<name>ADH_CUPNH</name>
<dbReference type="EC" id="1.1.1.1" evidence="2 3"/>
<dbReference type="EC" id="1.1.1.4" evidence="2 3"/>
<dbReference type="EC" id="1.2.1.3" evidence="2 3"/>
<dbReference type="EMBL" id="AM260479">
    <property type="protein sequence ID" value="CAJ91905.1"/>
    <property type="molecule type" value="Genomic_DNA"/>
</dbReference>
<dbReference type="RefSeq" id="WP_010812995.1">
    <property type="nucleotide sequence ID" value="NZ_CP039287.1"/>
</dbReference>
<dbReference type="SMR" id="Q0KDL6"/>
<dbReference type="STRING" id="381666.H16_A0757"/>
<dbReference type="KEGG" id="reh:H16_A0757"/>
<dbReference type="eggNOG" id="COG1063">
    <property type="taxonomic scope" value="Bacteria"/>
</dbReference>
<dbReference type="HOGENOM" id="CLU_026673_11_3_4"/>
<dbReference type="OrthoDB" id="9773078at2"/>
<dbReference type="SABIO-RK" id="Q0KDL6"/>
<dbReference type="Proteomes" id="UP000008210">
    <property type="component" value="Chromosome 1"/>
</dbReference>
<dbReference type="GO" id="GO:0000721">
    <property type="term" value="F:(R,R)-butanediol dehydrogenase activity"/>
    <property type="evidence" value="ECO:0007669"/>
    <property type="project" value="UniProtKB-EC"/>
</dbReference>
<dbReference type="GO" id="GO:0004022">
    <property type="term" value="F:alcohol dehydrogenase (NAD+) activity"/>
    <property type="evidence" value="ECO:0007669"/>
    <property type="project" value="UniProtKB-EC"/>
</dbReference>
<dbReference type="GO" id="GO:0004029">
    <property type="term" value="F:aldehyde dehydrogenase (NAD+) activity"/>
    <property type="evidence" value="ECO:0007669"/>
    <property type="project" value="UniProtKB-EC"/>
</dbReference>
<dbReference type="GO" id="GO:0008270">
    <property type="term" value="F:zinc ion binding"/>
    <property type="evidence" value="ECO:0007669"/>
    <property type="project" value="InterPro"/>
</dbReference>
<dbReference type="CDD" id="cd08285">
    <property type="entry name" value="NADP_ADH"/>
    <property type="match status" value="1"/>
</dbReference>
<dbReference type="Gene3D" id="3.90.180.10">
    <property type="entry name" value="Medium-chain alcohol dehydrogenases, catalytic domain"/>
    <property type="match status" value="1"/>
</dbReference>
<dbReference type="Gene3D" id="3.40.50.720">
    <property type="entry name" value="NAD(P)-binding Rossmann-like Domain"/>
    <property type="match status" value="1"/>
</dbReference>
<dbReference type="InterPro" id="IPR013149">
    <property type="entry name" value="ADH-like_C"/>
</dbReference>
<dbReference type="InterPro" id="IPR013154">
    <property type="entry name" value="ADH-like_N"/>
</dbReference>
<dbReference type="InterPro" id="IPR002328">
    <property type="entry name" value="ADH_Zn_CS"/>
</dbReference>
<dbReference type="InterPro" id="IPR011032">
    <property type="entry name" value="GroES-like_sf"/>
</dbReference>
<dbReference type="InterPro" id="IPR036291">
    <property type="entry name" value="NAD(P)-bd_dom_sf"/>
</dbReference>
<dbReference type="InterPro" id="IPR020843">
    <property type="entry name" value="PKS_ER"/>
</dbReference>
<dbReference type="PANTHER" id="PTHR42813:SF4">
    <property type="entry name" value="NADP-DEPENDENT ISOPROPANOL DEHYDROGENASE"/>
    <property type="match status" value="1"/>
</dbReference>
<dbReference type="PANTHER" id="PTHR42813">
    <property type="entry name" value="ZINC-TYPE ALCOHOL DEHYDROGENASE-LIKE"/>
    <property type="match status" value="1"/>
</dbReference>
<dbReference type="Pfam" id="PF08240">
    <property type="entry name" value="ADH_N"/>
    <property type="match status" value="1"/>
</dbReference>
<dbReference type="Pfam" id="PF00107">
    <property type="entry name" value="ADH_zinc_N"/>
    <property type="match status" value="1"/>
</dbReference>
<dbReference type="SMART" id="SM00829">
    <property type="entry name" value="PKS_ER"/>
    <property type="match status" value="1"/>
</dbReference>
<dbReference type="SUPFAM" id="SSF50129">
    <property type="entry name" value="GroES-like"/>
    <property type="match status" value="1"/>
</dbReference>
<dbReference type="SUPFAM" id="SSF51735">
    <property type="entry name" value="NAD(P)-binding Rossmann-fold domains"/>
    <property type="match status" value="1"/>
</dbReference>
<dbReference type="PROSITE" id="PS00059">
    <property type="entry name" value="ADH_ZINC"/>
    <property type="match status" value="1"/>
</dbReference>
<evidence type="ECO:0000250" key="1"/>
<evidence type="ECO:0000269" key="2">
    <source>
    </source>
</evidence>
<evidence type="ECO:0000269" key="3">
    <source>
    </source>
</evidence>
<evidence type="ECO:0000305" key="4"/>
<accession>Q0KDL6</accession>
<protein>
    <recommendedName>
        <fullName>Alcohol dehydrogenase</fullName>
        <ecNumber evidence="2 3">1.1.1.1</ecNumber>
        <ecNumber evidence="2 3">1.1.1.4</ecNumber>
        <ecNumber evidence="2 3">1.2.1.3</ecNumber>
    </recommendedName>
</protein>
<reference key="1">
    <citation type="journal article" date="2006" name="Nat. Biotechnol.">
        <title>Genome sequence of the bioplastic-producing 'Knallgas' bacterium Ralstonia eutropha H16.</title>
        <authorList>
            <person name="Pohlmann A."/>
            <person name="Fricke W.F."/>
            <person name="Reinecke F."/>
            <person name="Kusian B."/>
            <person name="Liesegang H."/>
            <person name="Cramm R."/>
            <person name="Eitinger T."/>
            <person name="Ewering C."/>
            <person name="Poetter M."/>
            <person name="Schwartz E."/>
            <person name="Strittmatter A."/>
            <person name="Voss I."/>
            <person name="Gottschalk G."/>
            <person name="Steinbuechel A."/>
            <person name="Friedrich B."/>
            <person name="Bowien B."/>
        </authorList>
    </citation>
    <scope>NUCLEOTIDE SEQUENCE [LARGE SCALE GENOMIC DNA]</scope>
    <source>
        <strain>ATCC 17699 / DSM 428 / KCTC 22496 / NCIMB 10442 / H16 / Stanier 337</strain>
    </source>
</reference>
<reference key="2">
    <citation type="journal article" date="1990" name="J. Bacteriol.">
        <title>Characterization of alcohol dehydrogenase genes of derepressible wild-type Alcaligenes eutrophus H16 and constitutive mutants.</title>
        <authorList>
            <person name="Jendrossek D."/>
            <person name="Kruger N."/>
            <person name="Steinbuchel A."/>
        </authorList>
    </citation>
    <scope>PROTEIN SEQUENCE OF 2-33</scope>
    <scope>CATALYTIC ACTIVITY</scope>
    <source>
        <strain>ATCC 17699 / DSM 428 / KCTC 22496 / NCIMB 10442 / H16 / Stanier 337</strain>
    </source>
</reference>
<reference key="3">
    <citation type="journal article" date="1984" name="Eur. J. Biochem.">
        <title>A multifunctional fermentative alcohol dehydrogenase from the strict aerobe Alcaligenes eutrophus: purification and properties.</title>
        <authorList>
            <person name="Steinbuchel A."/>
            <person name="Schlegel H.G."/>
        </authorList>
    </citation>
    <scope>CATALYTIC ACTIVITY</scope>
    <scope>FUNCTION</scope>
    <scope>BIOPHYSICOCHEMICAL PROPERTIES</scope>
    <scope>INDUCTION</scope>
    <scope>SUBUNIT</scope>
    <source>
        <strain>N9A / DSM 518</strain>
    </source>
</reference>